<sequence>MSDTTSTIIFEHPLNEKMRAWLRIESSLQQLTSQRHLNSLASSLAFFRTITELLEVLERGEVRSELLKELERQQAKLKQWAEIPDVDINIVNSFRLKLKERAIALSKAPRLGQSLKEDKIISLVRQRLSIPSGCCGFDLPTLHLWLHLPQSERDKMVAFWIDSLLPLQQALDSILELIRQSAIFRSEISKNGFHQNTAEGADLLRLRLPLTPLLFPQISGHKTRFAIRFLPLDSEKGSVPAHLPFELACC</sequence>
<name>ZAPD_PHOLL</name>
<protein>
    <recommendedName>
        <fullName evidence="1">Cell division protein ZapD</fullName>
    </recommendedName>
    <alternativeName>
        <fullName evidence="1">Z ring-associated protein D</fullName>
    </alternativeName>
</protein>
<keyword id="KW-0131">Cell cycle</keyword>
<keyword id="KW-0132">Cell division</keyword>
<keyword id="KW-0963">Cytoplasm</keyword>
<keyword id="KW-1185">Reference proteome</keyword>
<keyword id="KW-0717">Septation</keyword>
<reference key="1">
    <citation type="journal article" date="2003" name="Nat. Biotechnol.">
        <title>The genome sequence of the entomopathogenic bacterium Photorhabdus luminescens.</title>
        <authorList>
            <person name="Duchaud E."/>
            <person name="Rusniok C."/>
            <person name="Frangeul L."/>
            <person name="Buchrieser C."/>
            <person name="Givaudan A."/>
            <person name="Taourit S."/>
            <person name="Bocs S."/>
            <person name="Boursaux-Eude C."/>
            <person name="Chandler M."/>
            <person name="Charles J.-F."/>
            <person name="Dassa E."/>
            <person name="Derose R."/>
            <person name="Derzelle S."/>
            <person name="Freyssinet G."/>
            <person name="Gaudriault S."/>
            <person name="Medigue C."/>
            <person name="Lanois A."/>
            <person name="Powell K."/>
            <person name="Siguier P."/>
            <person name="Vincent R."/>
            <person name="Wingate V."/>
            <person name="Zouine M."/>
            <person name="Glaser P."/>
            <person name="Boemare N."/>
            <person name="Danchin A."/>
            <person name="Kunst F."/>
        </authorList>
    </citation>
    <scope>NUCLEOTIDE SEQUENCE [LARGE SCALE GENOMIC DNA]</scope>
    <source>
        <strain>DSM 15139 / CIP 105565 / TT01</strain>
    </source>
</reference>
<feature type="chain" id="PRO_0000211674" description="Cell division protein ZapD">
    <location>
        <begin position="1"/>
        <end position="250"/>
    </location>
</feature>
<comment type="function">
    <text evidence="1">Cell division factor that enhances FtsZ-ring assembly. Directly interacts with FtsZ and promotes bundling of FtsZ protofilaments, with a reduction in FtsZ GTPase activity.</text>
</comment>
<comment type="subunit">
    <text evidence="1">Interacts with FtsZ.</text>
</comment>
<comment type="subcellular location">
    <subcellularLocation>
        <location evidence="1">Cytoplasm</location>
    </subcellularLocation>
    <text evidence="1">Localizes to mid-cell in an FtsZ-dependent manner.</text>
</comment>
<comment type="similarity">
    <text evidence="1">Belongs to the ZapD family.</text>
</comment>
<gene>
    <name evidence="1" type="primary">zapD</name>
    <name type="ordered locus">plu3642</name>
</gene>
<dbReference type="EMBL" id="BX571871">
    <property type="protein sequence ID" value="CAE16015.1"/>
    <property type="molecule type" value="Genomic_DNA"/>
</dbReference>
<dbReference type="RefSeq" id="WP_011147805.1">
    <property type="nucleotide sequence ID" value="NC_005126.1"/>
</dbReference>
<dbReference type="SMR" id="P60013"/>
<dbReference type="STRING" id="243265.plu3642"/>
<dbReference type="GeneID" id="48849885"/>
<dbReference type="KEGG" id="plu:plu3642"/>
<dbReference type="eggNOG" id="COG4582">
    <property type="taxonomic scope" value="Bacteria"/>
</dbReference>
<dbReference type="HOGENOM" id="CLU_076303_0_0_6"/>
<dbReference type="OrthoDB" id="5294622at2"/>
<dbReference type="Proteomes" id="UP000002514">
    <property type="component" value="Chromosome"/>
</dbReference>
<dbReference type="GO" id="GO:0032153">
    <property type="term" value="C:cell division site"/>
    <property type="evidence" value="ECO:0007669"/>
    <property type="project" value="TreeGrafter"/>
</dbReference>
<dbReference type="GO" id="GO:0005737">
    <property type="term" value="C:cytoplasm"/>
    <property type="evidence" value="ECO:0007669"/>
    <property type="project" value="UniProtKB-SubCell"/>
</dbReference>
<dbReference type="GO" id="GO:0000917">
    <property type="term" value="P:division septum assembly"/>
    <property type="evidence" value="ECO:0007669"/>
    <property type="project" value="UniProtKB-KW"/>
</dbReference>
<dbReference type="GO" id="GO:0043093">
    <property type="term" value="P:FtsZ-dependent cytokinesis"/>
    <property type="evidence" value="ECO:0007669"/>
    <property type="project" value="UniProtKB-UniRule"/>
</dbReference>
<dbReference type="Gene3D" id="1.10.3900.10">
    <property type="entry name" value="YacF-like"/>
    <property type="match status" value="1"/>
</dbReference>
<dbReference type="Gene3D" id="2.60.440.10">
    <property type="entry name" value="YacF-like domains"/>
    <property type="match status" value="1"/>
</dbReference>
<dbReference type="HAMAP" id="MF_01092">
    <property type="entry name" value="ZapD"/>
    <property type="match status" value="1"/>
</dbReference>
<dbReference type="InterPro" id="IPR009777">
    <property type="entry name" value="ZapD"/>
</dbReference>
<dbReference type="InterPro" id="IPR027462">
    <property type="entry name" value="ZapD_C"/>
</dbReference>
<dbReference type="InterPro" id="IPR036268">
    <property type="entry name" value="ZapD_sf"/>
</dbReference>
<dbReference type="NCBIfam" id="NF003653">
    <property type="entry name" value="PRK05287.1-1"/>
    <property type="match status" value="1"/>
</dbReference>
<dbReference type="PANTHER" id="PTHR39455">
    <property type="entry name" value="CELL DIVISION PROTEIN ZAPD"/>
    <property type="match status" value="1"/>
</dbReference>
<dbReference type="PANTHER" id="PTHR39455:SF1">
    <property type="entry name" value="CELL DIVISION PROTEIN ZAPD"/>
    <property type="match status" value="1"/>
</dbReference>
<dbReference type="Pfam" id="PF07072">
    <property type="entry name" value="ZapD"/>
    <property type="match status" value="1"/>
</dbReference>
<dbReference type="SUPFAM" id="SSF160950">
    <property type="entry name" value="YacF-like"/>
    <property type="match status" value="1"/>
</dbReference>
<organism>
    <name type="scientific">Photorhabdus laumondii subsp. laumondii (strain DSM 15139 / CIP 105565 / TT01)</name>
    <name type="common">Photorhabdus luminescens subsp. laumondii</name>
    <dbReference type="NCBI Taxonomy" id="243265"/>
    <lineage>
        <taxon>Bacteria</taxon>
        <taxon>Pseudomonadati</taxon>
        <taxon>Pseudomonadota</taxon>
        <taxon>Gammaproteobacteria</taxon>
        <taxon>Enterobacterales</taxon>
        <taxon>Morganellaceae</taxon>
        <taxon>Photorhabdus</taxon>
    </lineage>
</organism>
<evidence type="ECO:0000255" key="1">
    <source>
        <dbReference type="HAMAP-Rule" id="MF_01092"/>
    </source>
</evidence>
<proteinExistence type="inferred from homology"/>
<accession>P60013</accession>